<proteinExistence type="inferred from homology"/>
<gene>
    <name evidence="1" type="primary">mukB</name>
    <name type="ordered locus">PM0609</name>
</gene>
<comment type="function">
    <text evidence="1">Plays a central role in chromosome condensation, segregation and cell cycle progression. Functions as a homodimer, which is essential for chromosome partition. Involved in negative DNA supercoiling in vivo, and by this means organize and compact chromosomes. May achieve or facilitate chromosome segregation by condensation DNA from both sides of a centrally located replisome during cell division.</text>
</comment>
<comment type="subunit">
    <text evidence="1">Homodimerization via its hinge domain. Binds to DNA via its C-terminal region. Interacts, and probably forms a ternary complex, with MukE and MukF via its C-terminal region. The complex formation is stimulated by calcium or magnesium. Interacts with tubulin-related protein FtsZ.</text>
</comment>
<comment type="subcellular location">
    <subcellularLocation>
        <location evidence="1">Cytoplasm</location>
        <location evidence="1">Nucleoid</location>
    </subcellularLocation>
    <text evidence="1">Restricted to the nucleoid region.</text>
</comment>
<comment type="domain">
    <text evidence="1">The hinge domain, which separates the large intramolecular coiled coil regions, allows the homodimerization, forming a V-shaped homodimer.</text>
</comment>
<comment type="similarity">
    <text evidence="1">Belongs to the SMC family. MukB subfamily.</text>
</comment>
<dbReference type="EMBL" id="AE004439">
    <property type="protein sequence ID" value="AAK02693.1"/>
    <property type="molecule type" value="Genomic_DNA"/>
</dbReference>
<dbReference type="RefSeq" id="WP_010906751.1">
    <property type="nucleotide sequence ID" value="NC_002663.1"/>
</dbReference>
<dbReference type="SMR" id="Q9CN36"/>
<dbReference type="STRING" id="272843.PM0609"/>
<dbReference type="EnsemblBacteria" id="AAK02693">
    <property type="protein sequence ID" value="AAK02693"/>
    <property type="gene ID" value="PM0609"/>
</dbReference>
<dbReference type="KEGG" id="pmu:PM0609"/>
<dbReference type="PATRIC" id="fig|272843.6.peg.617"/>
<dbReference type="HOGENOM" id="CLU_004430_0_0_6"/>
<dbReference type="OrthoDB" id="6722439at2"/>
<dbReference type="Proteomes" id="UP000000809">
    <property type="component" value="Chromosome"/>
</dbReference>
<dbReference type="GO" id="GO:0005737">
    <property type="term" value="C:cytoplasm"/>
    <property type="evidence" value="ECO:0007669"/>
    <property type="project" value="UniProtKB-UniRule"/>
</dbReference>
<dbReference type="GO" id="GO:0009295">
    <property type="term" value="C:nucleoid"/>
    <property type="evidence" value="ECO:0007669"/>
    <property type="project" value="UniProtKB-SubCell"/>
</dbReference>
<dbReference type="GO" id="GO:0005524">
    <property type="term" value="F:ATP binding"/>
    <property type="evidence" value="ECO:0007669"/>
    <property type="project" value="UniProtKB-UniRule"/>
</dbReference>
<dbReference type="GO" id="GO:0003677">
    <property type="term" value="F:DNA binding"/>
    <property type="evidence" value="ECO:0007669"/>
    <property type="project" value="UniProtKB-UniRule"/>
</dbReference>
<dbReference type="GO" id="GO:0051301">
    <property type="term" value="P:cell division"/>
    <property type="evidence" value="ECO:0007669"/>
    <property type="project" value="UniProtKB-KW"/>
</dbReference>
<dbReference type="GO" id="GO:0030261">
    <property type="term" value="P:chromosome condensation"/>
    <property type="evidence" value="ECO:0007669"/>
    <property type="project" value="UniProtKB-KW"/>
</dbReference>
<dbReference type="GO" id="GO:0007059">
    <property type="term" value="P:chromosome segregation"/>
    <property type="evidence" value="ECO:0007669"/>
    <property type="project" value="UniProtKB-UniRule"/>
</dbReference>
<dbReference type="GO" id="GO:0006260">
    <property type="term" value="P:DNA replication"/>
    <property type="evidence" value="ECO:0007669"/>
    <property type="project" value="UniProtKB-UniRule"/>
</dbReference>
<dbReference type="Gene3D" id="1.20.58.850">
    <property type="match status" value="1"/>
</dbReference>
<dbReference type="Gene3D" id="3.40.1140.10">
    <property type="match status" value="2"/>
</dbReference>
<dbReference type="Gene3D" id="1.20.5.420">
    <property type="entry name" value="Immunoglobulin FC, subunit C"/>
    <property type="match status" value="1"/>
</dbReference>
<dbReference type="Gene3D" id="3.30.70.3500">
    <property type="entry name" value="MukB, hinge domain"/>
    <property type="match status" value="1"/>
</dbReference>
<dbReference type="HAMAP" id="MF_01800">
    <property type="entry name" value="MukB"/>
    <property type="match status" value="1"/>
</dbReference>
<dbReference type="InterPro" id="IPR012090">
    <property type="entry name" value="MukB"/>
</dbReference>
<dbReference type="InterPro" id="IPR050308">
    <property type="entry name" value="MukB/SMC"/>
</dbReference>
<dbReference type="InterPro" id="IPR032520">
    <property type="entry name" value="MukB_hinge"/>
</dbReference>
<dbReference type="InterPro" id="IPR042501">
    <property type="entry name" value="MukB_hinge_sf"/>
</dbReference>
<dbReference type="InterPro" id="IPR007406">
    <property type="entry name" value="MukB_N_dom"/>
</dbReference>
<dbReference type="InterPro" id="IPR027417">
    <property type="entry name" value="P-loop_NTPase"/>
</dbReference>
<dbReference type="NCBIfam" id="NF003422">
    <property type="entry name" value="PRK04863.1"/>
    <property type="match status" value="1"/>
</dbReference>
<dbReference type="PANTHER" id="PTHR42963">
    <property type="entry name" value="CHROMOSOME PARTITION PROTEIN MUKB"/>
    <property type="match status" value="1"/>
</dbReference>
<dbReference type="PANTHER" id="PTHR42963:SF1">
    <property type="entry name" value="DUF4476 DOMAIN-CONTAINING PROTEIN"/>
    <property type="match status" value="1"/>
</dbReference>
<dbReference type="Pfam" id="PF04310">
    <property type="entry name" value="MukB"/>
    <property type="match status" value="1"/>
</dbReference>
<dbReference type="Pfam" id="PF16330">
    <property type="entry name" value="MukB_hinge"/>
    <property type="match status" value="1"/>
</dbReference>
<dbReference type="Pfam" id="PF13558">
    <property type="entry name" value="SbcC_Walker_B"/>
    <property type="match status" value="1"/>
</dbReference>
<dbReference type="PIRSF" id="PIRSF005246">
    <property type="entry name" value="MukB"/>
    <property type="match status" value="1"/>
</dbReference>
<dbReference type="SUPFAM" id="SSF52540">
    <property type="entry name" value="P-loop containing nucleoside triphosphate hydrolases"/>
    <property type="match status" value="2"/>
</dbReference>
<protein>
    <recommendedName>
        <fullName evidence="1">Chromosome partition protein MukB</fullName>
    </recommendedName>
    <alternativeName>
        <fullName evidence="1">Structural maintenance of chromosome-related protein</fullName>
    </alternativeName>
</protein>
<sequence>MSEELALENLEHVETSVPHTVFSHANSAPRGKFRSLTLINWNGFFARTFDLDELVTTLSGGNGAGKSTTMAGFVTALIPDLTLLHFRNTTEAGATSGSRDKGLHGKLRPGVCYAALDTINSRNQRVIVGARLQQVAGRDKKVDIKTFSIQGLNLAENPTTIFTDVVNERQARVLTLNELKEKIEQAGAQFKQYHSITDYHAMMFDLGIIPKRLRSSSDRSKFYKLIEASLYGGISSAITRSLRDYLLPENLGVRKAFQDMESALRENRMTLEAIKVTQADRDLFKHLITETSNYVASDYMRHANERRGNIESAVRFRQDWYRARTEQHLSQQRLVELSREAAELAENEKTLEVDHQSAVDYLNLVLNALRHQEKIARYQDDVAEITARLEEQKMVVETATEQLEESQVQVEQVEQEVDQIRAQLADYQQALDAQQTRALQYQQAIAALEKAKTLCGLADLGVKNVEAYHDEFAAHAESLTEQVLELEQRMSISDAAKSQFDKAYQLVCKVAGEIPRSTAFEQAKVLLRDYPTQKVQAQQTSQLRAKLHELEQRYAQQQSAVRLLKEFNQRANVSLEDAEALEAYHAEQEALLEDVSAELSEQVEQRSTLRQKREQLSALYQDNAKKAPAWLTAQAALERLQDQSGETFADSQDVMQFMQAQLVKERELTIERDQLEQQRQQLEAQISRLSQPDGSEDARLNVLAERFGGVLLSELYDDVPIEDAPYFSALYGPARHAIVVRDLDAVKGQLAQLEECPDDLYLIEGDPTAFDDSVLSAQELAHGVVVQVSDRELRYSKFPEIPLFGRAAREQYLEALQQQRDDVTEQHAQRAFDVQKCQRLHEHFSQFVGLHLALAFQPNPEDVMAEIQQQRNEIERELNQFVTTEQQLRIQLDYAKEKMQLLNKLIPQLNLIADESLIDRVEECREQLDIAEQDELFIRQYGATLSQLEPIANTLQSDPEHYERLKADYEQAISQQKQVQQRLFALADVLQRKAHFAYEERVQTENTDLNEQLRAKLDSLQQQREVQKAQLQQKQQQFTNYNRVYIELQTSFNNKMQMLQELLQEVGELGVRADQGAEERAKQRRDELHQVLSDTRQRRHYVEKQLTLIESEAQSLNARIRKAERDYKTQRELVVAAKVSWCVVMRLSRGSDVEKRLNRREFAYLSADELRSMSDKALGALRTAVADNEYLRDSLRLSEDNRKPENKVRFFIAVYQHLRERIRQDIIKTDDPIDAIEQMEIELSRLTDELTRREQKLAISSESVANIMRKTIQREQNRIRMLNQGLQNIAFGQVKSVRLVVNIRDTHAMLLDALSGTQEEYQDLFTDQRMTFSEAIAKLYQRLNPHIDMGQRTAQTIGEELLDYRNYLDLEVEVYRGADGWLRAESGALSTGEAIGTGMSILLMVVQSWEEESRRIRGKDIVPCRLLFLDEAARLDAKSISTLFELCERLDMQLLIAAPENISPEKGTTYKLVRKIAGNQEHVHVVGLRGFGATA</sequence>
<feature type="chain" id="PRO_0000068223" description="Chromosome partition protein MukB">
    <location>
        <begin position="1"/>
        <end position="1495"/>
    </location>
</feature>
<feature type="region of interest" description="Flexible hinge" evidence="1">
    <location>
        <begin position="692"/>
        <end position="809"/>
    </location>
</feature>
<feature type="coiled-coil region" evidence="1">
    <location>
        <begin position="322"/>
        <end position="693"/>
    </location>
</feature>
<feature type="coiled-coil region" evidence="1">
    <location>
        <begin position="861"/>
        <end position="1140"/>
    </location>
</feature>
<feature type="coiled-coil region" evidence="1">
    <location>
        <begin position="1233"/>
        <end position="1289"/>
    </location>
</feature>
<feature type="binding site" evidence="1">
    <location>
        <begin position="60"/>
        <end position="67"/>
    </location>
    <ligand>
        <name>ATP</name>
        <dbReference type="ChEBI" id="CHEBI:30616"/>
    </ligand>
</feature>
<keyword id="KW-0067">ATP-binding</keyword>
<keyword id="KW-0131">Cell cycle</keyword>
<keyword id="KW-0132">Cell division</keyword>
<keyword id="KW-0159">Chromosome partition</keyword>
<keyword id="KW-0175">Coiled coil</keyword>
<keyword id="KW-0963">Cytoplasm</keyword>
<keyword id="KW-0226">DNA condensation</keyword>
<keyword id="KW-0238">DNA-binding</keyword>
<keyword id="KW-0547">Nucleotide-binding</keyword>
<keyword id="KW-1185">Reference proteome</keyword>
<accession>Q9CN36</accession>
<organism>
    <name type="scientific">Pasteurella multocida (strain Pm70)</name>
    <dbReference type="NCBI Taxonomy" id="272843"/>
    <lineage>
        <taxon>Bacteria</taxon>
        <taxon>Pseudomonadati</taxon>
        <taxon>Pseudomonadota</taxon>
        <taxon>Gammaproteobacteria</taxon>
        <taxon>Pasteurellales</taxon>
        <taxon>Pasteurellaceae</taxon>
        <taxon>Pasteurella</taxon>
    </lineage>
</organism>
<name>MUKB_PASMU</name>
<evidence type="ECO:0000255" key="1">
    <source>
        <dbReference type="HAMAP-Rule" id="MF_01800"/>
    </source>
</evidence>
<reference key="1">
    <citation type="journal article" date="2001" name="Proc. Natl. Acad. Sci. U.S.A.">
        <title>Complete genomic sequence of Pasteurella multocida Pm70.</title>
        <authorList>
            <person name="May B.J."/>
            <person name="Zhang Q."/>
            <person name="Li L.L."/>
            <person name="Paustian M.L."/>
            <person name="Whittam T.S."/>
            <person name="Kapur V."/>
        </authorList>
    </citation>
    <scope>NUCLEOTIDE SEQUENCE [LARGE SCALE GENOMIC DNA]</scope>
    <source>
        <strain>Pm70</strain>
    </source>
</reference>